<name>GLGC_DEIGD</name>
<sequence>MKPRVLGMILAGGQGSRLAPLTLKRSKPAVPFGGKYRIIDFAINNFINSGVFSIYVLTQYKAQSLTEHIQRGWRFGTFLQDYFITLVPAQMYRYEELGAVWYRGTADAVYQNLHLIDNFNADYVAIFSGDHIYKMNVEHMLQAHMDARADVTIAAYPMPRTRAHQFGVMQVDDRWRVTEFLEKPQDPPGLPGDPDTSLTSMGNYIFSRRALEELLHTSISGEGEGFDFGHNVLPRALADGYHVQAYDFHRNPIPGQSSPNLYWRDVGTLDAYFEASMDLVSVNPEFDIYNPQWPLRTSSEFSPPAKFVHEAEGRKGQAFNSLLAGGVIISGGTVRDSILSRNVRTHSYSLVESCVLFDNVEVGRHSHLRRVIVDKDVIIPPGTRIGLDHEEDRGRGFTVTNNGIVVVPKSYTF</sequence>
<keyword id="KW-0067">ATP-binding</keyword>
<keyword id="KW-0119">Carbohydrate metabolism</keyword>
<keyword id="KW-0320">Glycogen biosynthesis</keyword>
<keyword id="KW-0321">Glycogen metabolism</keyword>
<keyword id="KW-0547">Nucleotide-binding</keyword>
<keyword id="KW-0548">Nucleotidyltransferase</keyword>
<keyword id="KW-0808">Transferase</keyword>
<protein>
    <recommendedName>
        <fullName evidence="1">Glucose-1-phosphate adenylyltransferase</fullName>
        <ecNumber evidence="1">2.7.7.27</ecNumber>
    </recommendedName>
    <alternativeName>
        <fullName evidence="1">ADP-glucose pyrophosphorylase</fullName>
        <shortName evidence="1">ADPGlc PPase</shortName>
    </alternativeName>
    <alternativeName>
        <fullName evidence="1">ADP-glucose synthase</fullName>
    </alternativeName>
</protein>
<accession>Q1J021</accession>
<comment type="function">
    <text evidence="1">Involved in the biosynthesis of ADP-glucose, a building block required for the elongation reactions to produce glycogen. Catalyzes the reaction between ATP and alpha-D-glucose 1-phosphate (G1P) to produce pyrophosphate and ADP-Glc.</text>
</comment>
<comment type="catalytic activity">
    <reaction evidence="1">
        <text>alpha-D-glucose 1-phosphate + ATP + H(+) = ADP-alpha-D-glucose + diphosphate</text>
        <dbReference type="Rhea" id="RHEA:12120"/>
        <dbReference type="ChEBI" id="CHEBI:15378"/>
        <dbReference type="ChEBI" id="CHEBI:30616"/>
        <dbReference type="ChEBI" id="CHEBI:33019"/>
        <dbReference type="ChEBI" id="CHEBI:57498"/>
        <dbReference type="ChEBI" id="CHEBI:58601"/>
        <dbReference type="EC" id="2.7.7.27"/>
    </reaction>
</comment>
<comment type="pathway">
    <text evidence="1">Glycan biosynthesis; glycogen biosynthesis.</text>
</comment>
<comment type="subunit">
    <text evidence="1">Homotetramer.</text>
</comment>
<comment type="similarity">
    <text evidence="1">Belongs to the bacterial/plant glucose-1-phosphate adenylyltransferase family.</text>
</comment>
<gene>
    <name evidence="1" type="primary">glgC</name>
    <name type="ordered locus">Dgeo_0861</name>
</gene>
<reference key="1">
    <citation type="submission" date="2006-04" db="EMBL/GenBank/DDBJ databases">
        <title>Complete sequence of chromosome of Deinococcus geothermalis DSM 11300.</title>
        <authorList>
            <person name="Copeland A."/>
            <person name="Lucas S."/>
            <person name="Lapidus A."/>
            <person name="Barry K."/>
            <person name="Detter J.C."/>
            <person name="Glavina del Rio T."/>
            <person name="Hammon N."/>
            <person name="Israni S."/>
            <person name="Dalin E."/>
            <person name="Tice H."/>
            <person name="Pitluck S."/>
            <person name="Brettin T."/>
            <person name="Bruce D."/>
            <person name="Han C."/>
            <person name="Tapia R."/>
            <person name="Saunders E."/>
            <person name="Gilna P."/>
            <person name="Schmutz J."/>
            <person name="Larimer F."/>
            <person name="Land M."/>
            <person name="Hauser L."/>
            <person name="Kyrpides N."/>
            <person name="Kim E."/>
            <person name="Daly M.J."/>
            <person name="Fredrickson J.K."/>
            <person name="Makarova K.S."/>
            <person name="Gaidamakova E.K."/>
            <person name="Zhai M."/>
            <person name="Richardson P."/>
        </authorList>
    </citation>
    <scope>NUCLEOTIDE SEQUENCE [LARGE SCALE GENOMIC DNA]</scope>
    <source>
        <strain>DSM 11300 / CIP 105573 / AG-3a</strain>
    </source>
</reference>
<feature type="chain" id="PRO_0000261865" description="Glucose-1-phosphate adenylyltransferase">
    <location>
        <begin position="1"/>
        <end position="413"/>
    </location>
</feature>
<feature type="binding site" evidence="1">
    <location>
        <position position="102"/>
    </location>
    <ligand>
        <name>alpha-D-glucose 1-phosphate</name>
        <dbReference type="ChEBI" id="CHEBI:58601"/>
    </ligand>
</feature>
<feature type="binding site" evidence="1">
    <location>
        <position position="167"/>
    </location>
    <ligand>
        <name>alpha-D-glucose 1-phosphate</name>
        <dbReference type="ChEBI" id="CHEBI:58601"/>
    </ligand>
</feature>
<feature type="binding site" evidence="1">
    <location>
        <begin position="182"/>
        <end position="183"/>
    </location>
    <ligand>
        <name>alpha-D-glucose 1-phosphate</name>
        <dbReference type="ChEBI" id="CHEBI:58601"/>
    </ligand>
</feature>
<feature type="binding site" evidence="1">
    <location>
        <position position="200"/>
    </location>
    <ligand>
        <name>alpha-D-glucose 1-phosphate</name>
        <dbReference type="ChEBI" id="CHEBI:58601"/>
    </ligand>
</feature>
<organism>
    <name type="scientific">Deinococcus geothermalis (strain DSM 11300 / CIP 105573 / AG-3a)</name>
    <dbReference type="NCBI Taxonomy" id="319795"/>
    <lineage>
        <taxon>Bacteria</taxon>
        <taxon>Thermotogati</taxon>
        <taxon>Deinococcota</taxon>
        <taxon>Deinococci</taxon>
        <taxon>Deinococcales</taxon>
        <taxon>Deinococcaceae</taxon>
        <taxon>Deinococcus</taxon>
    </lineage>
</organism>
<evidence type="ECO:0000255" key="1">
    <source>
        <dbReference type="HAMAP-Rule" id="MF_00624"/>
    </source>
</evidence>
<proteinExistence type="inferred from homology"/>
<dbReference type="EC" id="2.7.7.27" evidence="1"/>
<dbReference type="EMBL" id="CP000359">
    <property type="protein sequence ID" value="ABF45163.1"/>
    <property type="molecule type" value="Genomic_DNA"/>
</dbReference>
<dbReference type="RefSeq" id="WP_011530001.1">
    <property type="nucleotide sequence ID" value="NC_008025.1"/>
</dbReference>
<dbReference type="SMR" id="Q1J021"/>
<dbReference type="STRING" id="319795.Dgeo_0861"/>
<dbReference type="KEGG" id="dge:Dgeo_0861"/>
<dbReference type="eggNOG" id="COG0448">
    <property type="taxonomic scope" value="Bacteria"/>
</dbReference>
<dbReference type="HOGENOM" id="CLU_029499_14_1_0"/>
<dbReference type="UniPathway" id="UPA00164"/>
<dbReference type="Proteomes" id="UP000002431">
    <property type="component" value="Chromosome"/>
</dbReference>
<dbReference type="GO" id="GO:0005524">
    <property type="term" value="F:ATP binding"/>
    <property type="evidence" value="ECO:0007669"/>
    <property type="project" value="UniProtKB-KW"/>
</dbReference>
<dbReference type="GO" id="GO:0008878">
    <property type="term" value="F:glucose-1-phosphate adenylyltransferase activity"/>
    <property type="evidence" value="ECO:0007669"/>
    <property type="project" value="UniProtKB-UniRule"/>
</dbReference>
<dbReference type="GO" id="GO:0005978">
    <property type="term" value="P:glycogen biosynthetic process"/>
    <property type="evidence" value="ECO:0007669"/>
    <property type="project" value="UniProtKB-UniRule"/>
</dbReference>
<dbReference type="CDD" id="cd02508">
    <property type="entry name" value="ADP_Glucose_PP"/>
    <property type="match status" value="1"/>
</dbReference>
<dbReference type="CDD" id="cd04651">
    <property type="entry name" value="LbH_G1P_AT_C"/>
    <property type="match status" value="1"/>
</dbReference>
<dbReference type="Gene3D" id="2.160.10.10">
    <property type="entry name" value="Hexapeptide repeat proteins"/>
    <property type="match status" value="1"/>
</dbReference>
<dbReference type="Gene3D" id="3.90.550.10">
    <property type="entry name" value="Spore Coat Polysaccharide Biosynthesis Protein SpsA, Chain A"/>
    <property type="match status" value="1"/>
</dbReference>
<dbReference type="HAMAP" id="MF_00624">
    <property type="entry name" value="GlgC"/>
    <property type="match status" value="1"/>
</dbReference>
<dbReference type="InterPro" id="IPR011831">
    <property type="entry name" value="ADP-Glc_PPase"/>
</dbReference>
<dbReference type="InterPro" id="IPR005836">
    <property type="entry name" value="ADP_Glu_pyroP_CS"/>
</dbReference>
<dbReference type="InterPro" id="IPR023049">
    <property type="entry name" value="GlgC_bac"/>
</dbReference>
<dbReference type="InterPro" id="IPR056818">
    <property type="entry name" value="GlmU/GlgC-like_hexapep"/>
</dbReference>
<dbReference type="InterPro" id="IPR005835">
    <property type="entry name" value="NTP_transferase_dom"/>
</dbReference>
<dbReference type="InterPro" id="IPR029044">
    <property type="entry name" value="Nucleotide-diphossugar_trans"/>
</dbReference>
<dbReference type="InterPro" id="IPR011004">
    <property type="entry name" value="Trimer_LpxA-like_sf"/>
</dbReference>
<dbReference type="NCBIfam" id="TIGR02091">
    <property type="entry name" value="glgC"/>
    <property type="match status" value="1"/>
</dbReference>
<dbReference type="NCBIfam" id="NF001947">
    <property type="entry name" value="PRK00725.1"/>
    <property type="match status" value="1"/>
</dbReference>
<dbReference type="NCBIfam" id="NF002023">
    <property type="entry name" value="PRK00844.1"/>
    <property type="match status" value="1"/>
</dbReference>
<dbReference type="PANTHER" id="PTHR43523:SF2">
    <property type="entry name" value="GLUCOSE-1-PHOSPHATE ADENYLYLTRANSFERASE"/>
    <property type="match status" value="1"/>
</dbReference>
<dbReference type="PANTHER" id="PTHR43523">
    <property type="entry name" value="GLUCOSE-1-PHOSPHATE ADENYLYLTRANSFERASE-RELATED"/>
    <property type="match status" value="1"/>
</dbReference>
<dbReference type="Pfam" id="PF24894">
    <property type="entry name" value="Hexapep_GlmU"/>
    <property type="match status" value="1"/>
</dbReference>
<dbReference type="Pfam" id="PF00483">
    <property type="entry name" value="NTP_transferase"/>
    <property type="match status" value="1"/>
</dbReference>
<dbReference type="SUPFAM" id="SSF53448">
    <property type="entry name" value="Nucleotide-diphospho-sugar transferases"/>
    <property type="match status" value="1"/>
</dbReference>
<dbReference type="SUPFAM" id="SSF51161">
    <property type="entry name" value="Trimeric LpxA-like enzymes"/>
    <property type="match status" value="1"/>
</dbReference>
<dbReference type="PROSITE" id="PS00808">
    <property type="entry name" value="ADP_GLC_PYROPHOSPH_1"/>
    <property type="match status" value="1"/>
</dbReference>
<dbReference type="PROSITE" id="PS00809">
    <property type="entry name" value="ADP_GLC_PYROPHOSPH_2"/>
    <property type="match status" value="1"/>
</dbReference>